<reference key="1">
    <citation type="journal article" date="2008" name="J. Bacteriol.">
        <title>Genome sequence of a nephritogenic and highly transformable M49 strain of Streptococcus pyogenes.</title>
        <authorList>
            <person name="McShan W.M."/>
            <person name="Ferretti J.J."/>
            <person name="Karasawa T."/>
            <person name="Suvorov A.N."/>
            <person name="Lin S."/>
            <person name="Qin B."/>
            <person name="Jia H."/>
            <person name="Kenton S."/>
            <person name="Najar F."/>
            <person name="Wu H."/>
            <person name="Scott J."/>
            <person name="Roe B.A."/>
            <person name="Savic D.J."/>
        </authorList>
    </citation>
    <scope>NUCLEOTIDE SEQUENCE [LARGE SCALE GENOMIC DNA]</scope>
    <source>
        <strain>NZ131</strain>
    </source>
</reference>
<evidence type="ECO:0000255" key="1">
    <source>
        <dbReference type="HAMAP-Rule" id="MF_00551"/>
    </source>
</evidence>
<accession>B5XM21</accession>
<sequence length="208" mass="23816">MLKKPIIIGVTGGSGGGKTSVSRAILDSFPNARIAMIQHDSYYKDQSHMSFEERVKTNYDHPLAFDTDFMIQQLKELLAGRPVDIPIYDYKKHTRSNTTFRQDPQDVIIVEGILVLEDERLRDLMDIKLFVDTDDDIRIIRRIKRDMMERGRSLESIIDQYTSVVKPMYHQFIEPSKRYADIVIPEGVSNVVAIDVINSKIASILGEV</sequence>
<proteinExistence type="inferred from homology"/>
<keyword id="KW-0067">ATP-binding</keyword>
<keyword id="KW-0963">Cytoplasm</keyword>
<keyword id="KW-0418">Kinase</keyword>
<keyword id="KW-0547">Nucleotide-binding</keyword>
<keyword id="KW-0808">Transferase</keyword>
<comment type="catalytic activity">
    <reaction evidence="1">
        <text>uridine + ATP = UMP + ADP + H(+)</text>
        <dbReference type="Rhea" id="RHEA:16825"/>
        <dbReference type="ChEBI" id="CHEBI:15378"/>
        <dbReference type="ChEBI" id="CHEBI:16704"/>
        <dbReference type="ChEBI" id="CHEBI:30616"/>
        <dbReference type="ChEBI" id="CHEBI:57865"/>
        <dbReference type="ChEBI" id="CHEBI:456216"/>
        <dbReference type="EC" id="2.7.1.48"/>
    </reaction>
</comment>
<comment type="catalytic activity">
    <reaction evidence="1">
        <text>cytidine + ATP = CMP + ADP + H(+)</text>
        <dbReference type="Rhea" id="RHEA:24674"/>
        <dbReference type="ChEBI" id="CHEBI:15378"/>
        <dbReference type="ChEBI" id="CHEBI:17562"/>
        <dbReference type="ChEBI" id="CHEBI:30616"/>
        <dbReference type="ChEBI" id="CHEBI:60377"/>
        <dbReference type="ChEBI" id="CHEBI:456216"/>
        <dbReference type="EC" id="2.7.1.48"/>
    </reaction>
</comment>
<comment type="pathway">
    <text evidence="1">Pyrimidine metabolism; CTP biosynthesis via salvage pathway; CTP from cytidine: step 1/3.</text>
</comment>
<comment type="pathway">
    <text evidence="1">Pyrimidine metabolism; UMP biosynthesis via salvage pathway; UMP from uridine: step 1/1.</text>
</comment>
<comment type="subcellular location">
    <subcellularLocation>
        <location evidence="1">Cytoplasm</location>
    </subcellularLocation>
</comment>
<comment type="similarity">
    <text evidence="1">Belongs to the uridine kinase family.</text>
</comment>
<protein>
    <recommendedName>
        <fullName evidence="1">Uridine kinase</fullName>
        <ecNumber evidence="1">2.7.1.48</ecNumber>
    </recommendedName>
    <alternativeName>
        <fullName evidence="1">Cytidine monophosphokinase</fullName>
    </alternativeName>
    <alternativeName>
        <fullName evidence="1">Uridine monophosphokinase</fullName>
    </alternativeName>
</protein>
<organism>
    <name type="scientific">Streptococcus pyogenes serotype M49 (strain NZ131)</name>
    <dbReference type="NCBI Taxonomy" id="471876"/>
    <lineage>
        <taxon>Bacteria</taxon>
        <taxon>Bacillati</taxon>
        <taxon>Bacillota</taxon>
        <taxon>Bacilli</taxon>
        <taxon>Lactobacillales</taxon>
        <taxon>Streptococcaceae</taxon>
        <taxon>Streptococcus</taxon>
    </lineage>
</organism>
<feature type="chain" id="PRO_1000129094" description="Uridine kinase">
    <location>
        <begin position="1"/>
        <end position="208"/>
    </location>
</feature>
<feature type="binding site" evidence="1">
    <location>
        <begin position="12"/>
        <end position="19"/>
    </location>
    <ligand>
        <name>ATP</name>
        <dbReference type="ChEBI" id="CHEBI:30616"/>
    </ligand>
</feature>
<dbReference type="EC" id="2.7.1.48" evidence="1"/>
<dbReference type="EMBL" id="CP000829">
    <property type="protein sequence ID" value="ACI61383.1"/>
    <property type="molecule type" value="Genomic_DNA"/>
</dbReference>
<dbReference type="SMR" id="B5XM21"/>
<dbReference type="KEGG" id="soz:Spy49_1090c"/>
<dbReference type="HOGENOM" id="CLU_021278_1_2_9"/>
<dbReference type="UniPathway" id="UPA00574">
    <property type="reaction ID" value="UER00637"/>
</dbReference>
<dbReference type="UniPathway" id="UPA00579">
    <property type="reaction ID" value="UER00640"/>
</dbReference>
<dbReference type="Proteomes" id="UP000001039">
    <property type="component" value="Chromosome"/>
</dbReference>
<dbReference type="GO" id="GO:0005737">
    <property type="term" value="C:cytoplasm"/>
    <property type="evidence" value="ECO:0007669"/>
    <property type="project" value="UniProtKB-SubCell"/>
</dbReference>
<dbReference type="GO" id="GO:0005524">
    <property type="term" value="F:ATP binding"/>
    <property type="evidence" value="ECO:0007669"/>
    <property type="project" value="UniProtKB-UniRule"/>
</dbReference>
<dbReference type="GO" id="GO:0043771">
    <property type="term" value="F:cytidine kinase activity"/>
    <property type="evidence" value="ECO:0007669"/>
    <property type="project" value="RHEA"/>
</dbReference>
<dbReference type="GO" id="GO:0004849">
    <property type="term" value="F:uridine kinase activity"/>
    <property type="evidence" value="ECO:0007669"/>
    <property type="project" value="UniProtKB-UniRule"/>
</dbReference>
<dbReference type="GO" id="GO:0044211">
    <property type="term" value="P:CTP salvage"/>
    <property type="evidence" value="ECO:0007669"/>
    <property type="project" value="UniProtKB-UniRule"/>
</dbReference>
<dbReference type="GO" id="GO:0044206">
    <property type="term" value="P:UMP salvage"/>
    <property type="evidence" value="ECO:0007669"/>
    <property type="project" value="UniProtKB-UniRule"/>
</dbReference>
<dbReference type="CDD" id="cd02023">
    <property type="entry name" value="UMPK"/>
    <property type="match status" value="1"/>
</dbReference>
<dbReference type="Gene3D" id="3.40.50.300">
    <property type="entry name" value="P-loop containing nucleotide triphosphate hydrolases"/>
    <property type="match status" value="1"/>
</dbReference>
<dbReference type="HAMAP" id="MF_00551">
    <property type="entry name" value="Uridine_kinase"/>
    <property type="match status" value="1"/>
</dbReference>
<dbReference type="InterPro" id="IPR027417">
    <property type="entry name" value="P-loop_NTPase"/>
</dbReference>
<dbReference type="InterPro" id="IPR006083">
    <property type="entry name" value="PRK/URK"/>
</dbReference>
<dbReference type="InterPro" id="IPR026008">
    <property type="entry name" value="Uridine_kinase"/>
</dbReference>
<dbReference type="InterPro" id="IPR000764">
    <property type="entry name" value="Uridine_kinase-like"/>
</dbReference>
<dbReference type="NCBIfam" id="NF004018">
    <property type="entry name" value="PRK05480.1"/>
    <property type="match status" value="1"/>
</dbReference>
<dbReference type="NCBIfam" id="TIGR00235">
    <property type="entry name" value="udk"/>
    <property type="match status" value="1"/>
</dbReference>
<dbReference type="PANTHER" id="PTHR10285">
    <property type="entry name" value="URIDINE KINASE"/>
    <property type="match status" value="1"/>
</dbReference>
<dbReference type="Pfam" id="PF00485">
    <property type="entry name" value="PRK"/>
    <property type="match status" value="1"/>
</dbReference>
<dbReference type="PRINTS" id="PR00988">
    <property type="entry name" value="URIDINKINASE"/>
</dbReference>
<dbReference type="SUPFAM" id="SSF52540">
    <property type="entry name" value="P-loop containing nucleoside triphosphate hydrolases"/>
    <property type="match status" value="1"/>
</dbReference>
<name>URK_STRPZ</name>
<gene>
    <name evidence="1" type="primary">udk</name>
    <name type="ordered locus">Spy49_1090c</name>
</gene>